<accession>Q0KEQ3</accession>
<organism>
    <name type="scientific">Cupriavidus necator (strain ATCC 17699 / DSM 428 / KCTC 22496 / NCIMB 10442 / H16 / Stanier 337)</name>
    <name type="common">Ralstonia eutropha</name>
    <dbReference type="NCBI Taxonomy" id="381666"/>
    <lineage>
        <taxon>Bacteria</taxon>
        <taxon>Pseudomonadati</taxon>
        <taxon>Pseudomonadota</taxon>
        <taxon>Betaproteobacteria</taxon>
        <taxon>Burkholderiales</taxon>
        <taxon>Burkholderiaceae</taxon>
        <taxon>Cupriavidus</taxon>
    </lineage>
</organism>
<feature type="chain" id="PRO_1000011213" description="Phosphopantetheine adenylyltransferase">
    <location>
        <begin position="1"/>
        <end position="161"/>
    </location>
</feature>
<feature type="binding site" evidence="1">
    <location>
        <begin position="9"/>
        <end position="10"/>
    </location>
    <ligand>
        <name>ATP</name>
        <dbReference type="ChEBI" id="CHEBI:30616"/>
    </ligand>
</feature>
<feature type="binding site" evidence="1">
    <location>
        <position position="9"/>
    </location>
    <ligand>
        <name>substrate</name>
    </ligand>
</feature>
<feature type="binding site" evidence="1">
    <location>
        <position position="17"/>
    </location>
    <ligand>
        <name>ATP</name>
        <dbReference type="ChEBI" id="CHEBI:30616"/>
    </ligand>
</feature>
<feature type="binding site" evidence="1">
    <location>
        <position position="41"/>
    </location>
    <ligand>
        <name>substrate</name>
    </ligand>
</feature>
<feature type="binding site" evidence="1">
    <location>
        <position position="73"/>
    </location>
    <ligand>
        <name>substrate</name>
    </ligand>
</feature>
<feature type="binding site" evidence="1">
    <location>
        <position position="87"/>
    </location>
    <ligand>
        <name>substrate</name>
    </ligand>
</feature>
<feature type="binding site" evidence="1">
    <location>
        <begin position="88"/>
        <end position="90"/>
    </location>
    <ligand>
        <name>ATP</name>
        <dbReference type="ChEBI" id="CHEBI:30616"/>
    </ligand>
</feature>
<feature type="binding site" evidence="1">
    <location>
        <position position="98"/>
    </location>
    <ligand>
        <name>ATP</name>
        <dbReference type="ChEBI" id="CHEBI:30616"/>
    </ligand>
</feature>
<feature type="binding site" evidence="1">
    <location>
        <begin position="123"/>
        <end position="129"/>
    </location>
    <ligand>
        <name>ATP</name>
        <dbReference type="ChEBI" id="CHEBI:30616"/>
    </ligand>
</feature>
<feature type="site" description="Transition state stabilizer" evidence="1">
    <location>
        <position position="17"/>
    </location>
</feature>
<reference key="1">
    <citation type="journal article" date="2006" name="Nat. Biotechnol.">
        <title>Genome sequence of the bioplastic-producing 'Knallgas' bacterium Ralstonia eutropha H16.</title>
        <authorList>
            <person name="Pohlmann A."/>
            <person name="Fricke W.F."/>
            <person name="Reinecke F."/>
            <person name="Kusian B."/>
            <person name="Liesegang H."/>
            <person name="Cramm R."/>
            <person name="Eitinger T."/>
            <person name="Ewering C."/>
            <person name="Poetter M."/>
            <person name="Schwartz E."/>
            <person name="Strittmatter A."/>
            <person name="Voss I."/>
            <person name="Gottschalk G."/>
            <person name="Steinbuechel A."/>
            <person name="Friedrich B."/>
            <person name="Bowien B."/>
        </authorList>
    </citation>
    <scope>NUCLEOTIDE SEQUENCE [LARGE SCALE GENOMIC DNA]</scope>
    <source>
        <strain>ATCC 17699 / DSM 428 / KCTC 22496 / NCIMB 10442 / H16 / Stanier 337</strain>
    </source>
</reference>
<evidence type="ECO:0000255" key="1">
    <source>
        <dbReference type="HAMAP-Rule" id="MF_00151"/>
    </source>
</evidence>
<dbReference type="EC" id="2.7.7.3" evidence="1"/>
<dbReference type="EMBL" id="AM260479">
    <property type="protein sequence ID" value="CAJ91518.1"/>
    <property type="molecule type" value="Genomic_DNA"/>
</dbReference>
<dbReference type="RefSeq" id="WP_010814369.1">
    <property type="nucleotide sequence ID" value="NZ_CP039287.1"/>
</dbReference>
<dbReference type="SMR" id="Q0KEQ3"/>
<dbReference type="STRING" id="381666.H16_A0367"/>
<dbReference type="GeneID" id="34310352"/>
<dbReference type="KEGG" id="reh:H16_A0367"/>
<dbReference type="eggNOG" id="COG0669">
    <property type="taxonomic scope" value="Bacteria"/>
</dbReference>
<dbReference type="HOGENOM" id="CLU_100149_0_1_4"/>
<dbReference type="OrthoDB" id="9806661at2"/>
<dbReference type="UniPathway" id="UPA00241">
    <property type="reaction ID" value="UER00355"/>
</dbReference>
<dbReference type="Proteomes" id="UP000008210">
    <property type="component" value="Chromosome 1"/>
</dbReference>
<dbReference type="GO" id="GO:0005737">
    <property type="term" value="C:cytoplasm"/>
    <property type="evidence" value="ECO:0007669"/>
    <property type="project" value="UniProtKB-SubCell"/>
</dbReference>
<dbReference type="GO" id="GO:0005524">
    <property type="term" value="F:ATP binding"/>
    <property type="evidence" value="ECO:0007669"/>
    <property type="project" value="UniProtKB-KW"/>
</dbReference>
<dbReference type="GO" id="GO:0004595">
    <property type="term" value="F:pantetheine-phosphate adenylyltransferase activity"/>
    <property type="evidence" value="ECO:0007669"/>
    <property type="project" value="UniProtKB-UniRule"/>
</dbReference>
<dbReference type="GO" id="GO:0015937">
    <property type="term" value="P:coenzyme A biosynthetic process"/>
    <property type="evidence" value="ECO:0007669"/>
    <property type="project" value="UniProtKB-UniRule"/>
</dbReference>
<dbReference type="CDD" id="cd02163">
    <property type="entry name" value="PPAT"/>
    <property type="match status" value="1"/>
</dbReference>
<dbReference type="Gene3D" id="3.40.50.620">
    <property type="entry name" value="HUPs"/>
    <property type="match status" value="1"/>
</dbReference>
<dbReference type="HAMAP" id="MF_00151">
    <property type="entry name" value="PPAT_bact"/>
    <property type="match status" value="1"/>
</dbReference>
<dbReference type="InterPro" id="IPR004821">
    <property type="entry name" value="Cyt_trans-like"/>
</dbReference>
<dbReference type="InterPro" id="IPR001980">
    <property type="entry name" value="PPAT"/>
</dbReference>
<dbReference type="InterPro" id="IPR014729">
    <property type="entry name" value="Rossmann-like_a/b/a_fold"/>
</dbReference>
<dbReference type="NCBIfam" id="TIGR01510">
    <property type="entry name" value="coaD_prev_kdtB"/>
    <property type="match status" value="1"/>
</dbReference>
<dbReference type="NCBIfam" id="TIGR00125">
    <property type="entry name" value="cyt_tran_rel"/>
    <property type="match status" value="1"/>
</dbReference>
<dbReference type="PANTHER" id="PTHR21342">
    <property type="entry name" value="PHOSPHOPANTETHEINE ADENYLYLTRANSFERASE"/>
    <property type="match status" value="1"/>
</dbReference>
<dbReference type="PANTHER" id="PTHR21342:SF1">
    <property type="entry name" value="PHOSPHOPANTETHEINE ADENYLYLTRANSFERASE"/>
    <property type="match status" value="1"/>
</dbReference>
<dbReference type="Pfam" id="PF01467">
    <property type="entry name" value="CTP_transf_like"/>
    <property type="match status" value="1"/>
</dbReference>
<dbReference type="PRINTS" id="PR01020">
    <property type="entry name" value="LPSBIOSNTHSS"/>
</dbReference>
<dbReference type="SUPFAM" id="SSF52374">
    <property type="entry name" value="Nucleotidylyl transferase"/>
    <property type="match status" value="1"/>
</dbReference>
<comment type="function">
    <text evidence="1">Reversibly transfers an adenylyl group from ATP to 4'-phosphopantetheine, yielding dephospho-CoA (dPCoA) and pyrophosphate.</text>
</comment>
<comment type="catalytic activity">
    <reaction evidence="1">
        <text>(R)-4'-phosphopantetheine + ATP + H(+) = 3'-dephospho-CoA + diphosphate</text>
        <dbReference type="Rhea" id="RHEA:19801"/>
        <dbReference type="ChEBI" id="CHEBI:15378"/>
        <dbReference type="ChEBI" id="CHEBI:30616"/>
        <dbReference type="ChEBI" id="CHEBI:33019"/>
        <dbReference type="ChEBI" id="CHEBI:57328"/>
        <dbReference type="ChEBI" id="CHEBI:61723"/>
        <dbReference type="EC" id="2.7.7.3"/>
    </reaction>
</comment>
<comment type="cofactor">
    <cofactor evidence="1">
        <name>Mg(2+)</name>
        <dbReference type="ChEBI" id="CHEBI:18420"/>
    </cofactor>
</comment>
<comment type="pathway">
    <text evidence="1">Cofactor biosynthesis; coenzyme A biosynthesis; CoA from (R)-pantothenate: step 4/5.</text>
</comment>
<comment type="subunit">
    <text evidence="1">Homohexamer.</text>
</comment>
<comment type="subcellular location">
    <subcellularLocation>
        <location evidence="1">Cytoplasm</location>
    </subcellularLocation>
</comment>
<comment type="similarity">
    <text evidence="1">Belongs to the bacterial CoaD family.</text>
</comment>
<protein>
    <recommendedName>
        <fullName evidence="1">Phosphopantetheine adenylyltransferase</fullName>
        <ecNumber evidence="1">2.7.7.3</ecNumber>
    </recommendedName>
    <alternativeName>
        <fullName evidence="1">Dephospho-CoA pyrophosphorylase</fullName>
    </alternativeName>
    <alternativeName>
        <fullName evidence="1">Pantetheine-phosphate adenylyltransferase</fullName>
        <shortName evidence="1">PPAT</shortName>
    </alternativeName>
</protein>
<sequence>MVIAVYPGTFDPMTRGHEDLVRRASNIFDELVVGVAHSPNKRPFFSLEERIGIAREVLGHYPNVRVEGFSGLLKDFVRNNNARVIVRGLRAVSDFEYEFQMAGMNRYLLPDVETMFLTPSDQYQFISGTFVREIAVLGGDVSKFVFPSVERWLQEKIGKPE</sequence>
<gene>
    <name evidence="1" type="primary">coaD</name>
    <name type="ordered locus">H16_A0367</name>
</gene>
<keyword id="KW-0067">ATP-binding</keyword>
<keyword id="KW-0173">Coenzyme A biosynthesis</keyword>
<keyword id="KW-0963">Cytoplasm</keyword>
<keyword id="KW-0460">Magnesium</keyword>
<keyword id="KW-0547">Nucleotide-binding</keyword>
<keyword id="KW-0548">Nucleotidyltransferase</keyword>
<keyword id="KW-1185">Reference proteome</keyword>
<keyword id="KW-0808">Transferase</keyword>
<proteinExistence type="inferred from homology"/>
<name>COAD_CUPNH</name>